<reference key="1">
    <citation type="submission" date="2008-08" db="EMBL/GenBank/DDBJ databases">
        <title>Complete sequence of Vibrio fischeri strain MJ11.</title>
        <authorList>
            <person name="Mandel M.J."/>
            <person name="Stabb E.V."/>
            <person name="Ruby E.G."/>
            <person name="Ferriera S."/>
            <person name="Johnson J."/>
            <person name="Kravitz S."/>
            <person name="Beeson K."/>
            <person name="Sutton G."/>
            <person name="Rogers Y.-H."/>
            <person name="Friedman R."/>
            <person name="Frazier M."/>
            <person name="Venter J.C."/>
        </authorList>
    </citation>
    <scope>NUCLEOTIDE SEQUENCE [LARGE SCALE GENOMIC DNA]</scope>
    <source>
        <strain>MJ11</strain>
    </source>
</reference>
<name>LEUC_ALIFM</name>
<feature type="chain" id="PRO_1000135719" description="3-isopropylmalate dehydratase large subunit">
    <location>
        <begin position="1"/>
        <end position="471"/>
    </location>
</feature>
<feature type="binding site" evidence="1">
    <location>
        <position position="349"/>
    </location>
    <ligand>
        <name>[4Fe-4S] cluster</name>
        <dbReference type="ChEBI" id="CHEBI:49883"/>
    </ligand>
</feature>
<feature type="binding site" evidence="1">
    <location>
        <position position="409"/>
    </location>
    <ligand>
        <name>[4Fe-4S] cluster</name>
        <dbReference type="ChEBI" id="CHEBI:49883"/>
    </ligand>
</feature>
<feature type="binding site" evidence="1">
    <location>
        <position position="412"/>
    </location>
    <ligand>
        <name>[4Fe-4S] cluster</name>
        <dbReference type="ChEBI" id="CHEBI:49883"/>
    </ligand>
</feature>
<gene>
    <name evidence="1" type="primary">leuC</name>
    <name type="ordered locus">VFMJ11_0281</name>
</gene>
<keyword id="KW-0004">4Fe-4S</keyword>
<keyword id="KW-0028">Amino-acid biosynthesis</keyword>
<keyword id="KW-0100">Branched-chain amino acid biosynthesis</keyword>
<keyword id="KW-0408">Iron</keyword>
<keyword id="KW-0411">Iron-sulfur</keyword>
<keyword id="KW-0432">Leucine biosynthesis</keyword>
<keyword id="KW-0456">Lyase</keyword>
<keyword id="KW-0479">Metal-binding</keyword>
<comment type="function">
    <text evidence="1">Catalyzes the isomerization between 2-isopropylmalate and 3-isopropylmalate, via the formation of 2-isopropylmaleate.</text>
</comment>
<comment type="catalytic activity">
    <reaction evidence="1">
        <text>(2R,3S)-3-isopropylmalate = (2S)-2-isopropylmalate</text>
        <dbReference type="Rhea" id="RHEA:32287"/>
        <dbReference type="ChEBI" id="CHEBI:1178"/>
        <dbReference type="ChEBI" id="CHEBI:35121"/>
        <dbReference type="EC" id="4.2.1.33"/>
    </reaction>
</comment>
<comment type="cofactor">
    <cofactor evidence="1">
        <name>[4Fe-4S] cluster</name>
        <dbReference type="ChEBI" id="CHEBI:49883"/>
    </cofactor>
    <text evidence="1">Binds 1 [4Fe-4S] cluster per subunit.</text>
</comment>
<comment type="pathway">
    <text evidence="1">Amino-acid biosynthesis; L-leucine biosynthesis; L-leucine from 3-methyl-2-oxobutanoate: step 2/4.</text>
</comment>
<comment type="subunit">
    <text evidence="1">Heterodimer of LeuC and LeuD.</text>
</comment>
<comment type="similarity">
    <text evidence="1">Belongs to the aconitase/IPM isomerase family. LeuC type 1 subfamily.</text>
</comment>
<protein>
    <recommendedName>
        <fullName evidence="1">3-isopropylmalate dehydratase large subunit</fullName>
        <ecNumber evidence="1">4.2.1.33</ecNumber>
    </recommendedName>
    <alternativeName>
        <fullName evidence="1">Alpha-IPM isomerase</fullName>
        <shortName evidence="1">IPMI</shortName>
    </alternativeName>
    <alternativeName>
        <fullName evidence="1">Isopropylmalate isomerase</fullName>
    </alternativeName>
</protein>
<dbReference type="EC" id="4.2.1.33" evidence="1"/>
<dbReference type="EMBL" id="CP001139">
    <property type="protein sequence ID" value="ACH65033.1"/>
    <property type="molecule type" value="Genomic_DNA"/>
</dbReference>
<dbReference type="RefSeq" id="WP_012532781.1">
    <property type="nucleotide sequence ID" value="NC_011184.1"/>
</dbReference>
<dbReference type="SMR" id="B5FGH2"/>
<dbReference type="KEGG" id="vfm:VFMJ11_0281"/>
<dbReference type="HOGENOM" id="CLU_006714_3_4_6"/>
<dbReference type="UniPathway" id="UPA00048">
    <property type="reaction ID" value="UER00071"/>
</dbReference>
<dbReference type="Proteomes" id="UP000001857">
    <property type="component" value="Chromosome I"/>
</dbReference>
<dbReference type="GO" id="GO:0003861">
    <property type="term" value="F:3-isopropylmalate dehydratase activity"/>
    <property type="evidence" value="ECO:0007669"/>
    <property type="project" value="UniProtKB-UniRule"/>
</dbReference>
<dbReference type="GO" id="GO:0051539">
    <property type="term" value="F:4 iron, 4 sulfur cluster binding"/>
    <property type="evidence" value="ECO:0007669"/>
    <property type="project" value="UniProtKB-KW"/>
</dbReference>
<dbReference type="GO" id="GO:0046872">
    <property type="term" value="F:metal ion binding"/>
    <property type="evidence" value="ECO:0007669"/>
    <property type="project" value="UniProtKB-KW"/>
</dbReference>
<dbReference type="GO" id="GO:0009098">
    <property type="term" value="P:L-leucine biosynthetic process"/>
    <property type="evidence" value="ECO:0007669"/>
    <property type="project" value="UniProtKB-UniRule"/>
</dbReference>
<dbReference type="CDD" id="cd01583">
    <property type="entry name" value="IPMI"/>
    <property type="match status" value="1"/>
</dbReference>
<dbReference type="FunFam" id="3.30.499.10:FF:000006">
    <property type="entry name" value="3-isopropylmalate dehydratase large subunit"/>
    <property type="match status" value="1"/>
</dbReference>
<dbReference type="FunFam" id="3.30.499.10:FF:000007">
    <property type="entry name" value="3-isopropylmalate dehydratase large subunit"/>
    <property type="match status" value="1"/>
</dbReference>
<dbReference type="Gene3D" id="3.30.499.10">
    <property type="entry name" value="Aconitase, domain 3"/>
    <property type="match status" value="2"/>
</dbReference>
<dbReference type="HAMAP" id="MF_01026">
    <property type="entry name" value="LeuC_type1"/>
    <property type="match status" value="1"/>
</dbReference>
<dbReference type="InterPro" id="IPR004430">
    <property type="entry name" value="3-IsopropMal_deHydase_lsu"/>
</dbReference>
<dbReference type="InterPro" id="IPR015931">
    <property type="entry name" value="Acnase/IPM_dHydase_lsu_aba_1/3"/>
</dbReference>
<dbReference type="InterPro" id="IPR001030">
    <property type="entry name" value="Acoase/IPM_deHydtase_lsu_aba"/>
</dbReference>
<dbReference type="InterPro" id="IPR018136">
    <property type="entry name" value="Aconitase_4Fe-4S_BS"/>
</dbReference>
<dbReference type="InterPro" id="IPR036008">
    <property type="entry name" value="Aconitase_4Fe-4S_dom"/>
</dbReference>
<dbReference type="InterPro" id="IPR050067">
    <property type="entry name" value="IPM_dehydratase_rel_enz"/>
</dbReference>
<dbReference type="InterPro" id="IPR033941">
    <property type="entry name" value="IPMI_cat"/>
</dbReference>
<dbReference type="NCBIfam" id="TIGR00170">
    <property type="entry name" value="leuC"/>
    <property type="match status" value="1"/>
</dbReference>
<dbReference type="NCBIfam" id="NF004016">
    <property type="entry name" value="PRK05478.1"/>
    <property type="match status" value="1"/>
</dbReference>
<dbReference type="NCBIfam" id="NF009116">
    <property type="entry name" value="PRK12466.1"/>
    <property type="match status" value="1"/>
</dbReference>
<dbReference type="PANTHER" id="PTHR43822:SF9">
    <property type="entry name" value="3-ISOPROPYLMALATE DEHYDRATASE"/>
    <property type="match status" value="1"/>
</dbReference>
<dbReference type="PANTHER" id="PTHR43822">
    <property type="entry name" value="HOMOACONITASE, MITOCHONDRIAL-RELATED"/>
    <property type="match status" value="1"/>
</dbReference>
<dbReference type="Pfam" id="PF00330">
    <property type="entry name" value="Aconitase"/>
    <property type="match status" value="1"/>
</dbReference>
<dbReference type="PRINTS" id="PR00415">
    <property type="entry name" value="ACONITASE"/>
</dbReference>
<dbReference type="SUPFAM" id="SSF53732">
    <property type="entry name" value="Aconitase iron-sulfur domain"/>
    <property type="match status" value="1"/>
</dbReference>
<dbReference type="PROSITE" id="PS00450">
    <property type="entry name" value="ACONITASE_1"/>
    <property type="match status" value="1"/>
</dbReference>
<dbReference type="PROSITE" id="PS01244">
    <property type="entry name" value="ACONITASE_2"/>
    <property type="match status" value="1"/>
</dbReference>
<organism>
    <name type="scientific">Aliivibrio fischeri (strain MJ11)</name>
    <name type="common">Vibrio fischeri</name>
    <dbReference type="NCBI Taxonomy" id="388396"/>
    <lineage>
        <taxon>Bacteria</taxon>
        <taxon>Pseudomonadati</taxon>
        <taxon>Pseudomonadota</taxon>
        <taxon>Gammaproteobacteria</taxon>
        <taxon>Vibrionales</taxon>
        <taxon>Vibrionaceae</taxon>
        <taxon>Aliivibrio</taxon>
    </lineage>
</organism>
<accession>B5FGH2</accession>
<proteinExistence type="inferred from homology"/>
<evidence type="ECO:0000255" key="1">
    <source>
        <dbReference type="HAMAP-Rule" id="MF_01026"/>
    </source>
</evidence>
<sequence length="471" mass="50426">MSNAKTLYEKIYDAHVAVAAEGENPILYIDRHLVHEVTSPQAFDGLREKGRKIRQVGKTFATMDHNVSTQTKDINASGEMARIQMETLSKNCEEFGVTLYDLNHKYQGIVHVMGPELGITLPGMTIVCGDSHTATHGAFGSLAFGIGTSEVEHVLATQTLKQARAKTMKIDVKGKVAEGITAKDIVLAIIGKTTAAGGTGYVVEFCGEAITDLTMEGRMTVCNMAIELGAKAGLIAPDQTTFDYIAGRKFSPQGADLDAAIEYWSSLKTDDDAEFDAVVTLDASEIKPQVTWGTNPGQVIAVDAPIPAPESFADPVEKASAEKALAYMGLEAGKSLSDYNVDKVFVGSCTNSRIEDMRAAAAIAKGRKVASHVQALIVPGSEQVKAQAEKEGLDVIFKEAGFEWRLPGCSMCLAMNNDRLGPHERCASTSNRNFEGRQGRDGRTHLVSPAMAAAAAIAGHFVDIRTITEQA</sequence>